<gene>
    <name evidence="1" type="primary">coaD</name>
    <name type="ordered locus">HH_1361</name>
</gene>
<feature type="chain" id="PRO_0000156216" description="Phosphopantetheine adenylyltransferase">
    <location>
        <begin position="1"/>
        <end position="165"/>
    </location>
</feature>
<feature type="binding site" evidence="1">
    <location>
        <begin position="10"/>
        <end position="11"/>
    </location>
    <ligand>
        <name>ATP</name>
        <dbReference type="ChEBI" id="CHEBI:30616"/>
    </ligand>
</feature>
<feature type="binding site" evidence="1">
    <location>
        <position position="10"/>
    </location>
    <ligand>
        <name>substrate</name>
    </ligand>
</feature>
<feature type="binding site" evidence="1">
    <location>
        <position position="18"/>
    </location>
    <ligand>
        <name>ATP</name>
        <dbReference type="ChEBI" id="CHEBI:30616"/>
    </ligand>
</feature>
<feature type="binding site" evidence="1">
    <location>
        <position position="42"/>
    </location>
    <ligand>
        <name>substrate</name>
    </ligand>
</feature>
<feature type="binding site" evidence="1">
    <location>
        <position position="74"/>
    </location>
    <ligand>
        <name>substrate</name>
    </ligand>
</feature>
<feature type="binding site" evidence="1">
    <location>
        <position position="88"/>
    </location>
    <ligand>
        <name>substrate</name>
    </ligand>
</feature>
<feature type="binding site" evidence="1">
    <location>
        <begin position="89"/>
        <end position="91"/>
    </location>
    <ligand>
        <name>ATP</name>
        <dbReference type="ChEBI" id="CHEBI:30616"/>
    </ligand>
</feature>
<feature type="binding site" evidence="1">
    <location>
        <position position="99"/>
    </location>
    <ligand>
        <name>ATP</name>
        <dbReference type="ChEBI" id="CHEBI:30616"/>
    </ligand>
</feature>
<feature type="binding site" evidence="1">
    <location>
        <begin position="124"/>
        <end position="130"/>
    </location>
    <ligand>
        <name>ATP</name>
        <dbReference type="ChEBI" id="CHEBI:30616"/>
    </ligand>
</feature>
<feature type="site" description="Transition state stabilizer" evidence="1">
    <location>
        <position position="18"/>
    </location>
</feature>
<organism>
    <name type="scientific">Helicobacter hepaticus (strain ATCC 51449 / 3B1)</name>
    <dbReference type="NCBI Taxonomy" id="235279"/>
    <lineage>
        <taxon>Bacteria</taxon>
        <taxon>Pseudomonadati</taxon>
        <taxon>Campylobacterota</taxon>
        <taxon>Epsilonproteobacteria</taxon>
        <taxon>Campylobacterales</taxon>
        <taxon>Helicobacteraceae</taxon>
        <taxon>Helicobacter</taxon>
    </lineage>
</organism>
<reference key="1">
    <citation type="journal article" date="2003" name="Proc. Natl. Acad. Sci. U.S.A.">
        <title>The complete genome sequence of the carcinogenic bacterium Helicobacter hepaticus.</title>
        <authorList>
            <person name="Suerbaum S."/>
            <person name="Josenhans C."/>
            <person name="Sterzenbach T."/>
            <person name="Drescher B."/>
            <person name="Brandt P."/>
            <person name="Bell M."/>
            <person name="Droege M."/>
            <person name="Fartmann B."/>
            <person name="Fischer H.-P."/>
            <person name="Ge Z."/>
            <person name="Hoerster A."/>
            <person name="Holland R."/>
            <person name="Klein K."/>
            <person name="Koenig J."/>
            <person name="Macko L."/>
            <person name="Mendz G.L."/>
            <person name="Nyakatura G."/>
            <person name="Schauer D.B."/>
            <person name="Shen Z."/>
            <person name="Weber J."/>
            <person name="Frosch M."/>
            <person name="Fox J.G."/>
        </authorList>
    </citation>
    <scope>NUCLEOTIDE SEQUENCE [LARGE SCALE GENOMIC DNA]</scope>
    <source>
        <strain>ATCC 51449 / 3B1</strain>
    </source>
</reference>
<protein>
    <recommendedName>
        <fullName evidence="1">Phosphopantetheine adenylyltransferase</fullName>
        <ecNumber evidence="1">2.7.7.3</ecNumber>
    </recommendedName>
    <alternativeName>
        <fullName evidence="1">Dephospho-CoA pyrophosphorylase</fullName>
    </alternativeName>
    <alternativeName>
        <fullName evidence="1">Pantetheine-phosphate adenylyltransferase</fullName>
        <shortName evidence="1">PPAT</shortName>
    </alternativeName>
</protein>
<name>COAD_HELHP</name>
<accession>Q7VGG0</accession>
<evidence type="ECO:0000255" key="1">
    <source>
        <dbReference type="HAMAP-Rule" id="MF_00151"/>
    </source>
</evidence>
<keyword id="KW-0067">ATP-binding</keyword>
<keyword id="KW-0173">Coenzyme A biosynthesis</keyword>
<keyword id="KW-0963">Cytoplasm</keyword>
<keyword id="KW-0460">Magnesium</keyword>
<keyword id="KW-0547">Nucleotide-binding</keyword>
<keyword id="KW-0548">Nucleotidyltransferase</keyword>
<keyword id="KW-1185">Reference proteome</keyword>
<keyword id="KW-0808">Transferase</keyword>
<sequence length="165" mass="18578">MRTLAIYPGTFDPVTNGHLDIIKRSMEIFDNVIVAVAQSSSKRPMFSLQERIDILKLSTQNLVNVQVEGFCTLLADFAKQKGARMIIRGLRAVSDFEYELQIGYANASLNPELETIYFMPTLENAFISSSVVRSIIEHNGAFSHLVPKNAADFIYSLYTKHKRGM</sequence>
<dbReference type="EC" id="2.7.7.3" evidence="1"/>
<dbReference type="EMBL" id="AE017125">
    <property type="protein sequence ID" value="AAP77958.1"/>
    <property type="molecule type" value="Genomic_DNA"/>
</dbReference>
<dbReference type="RefSeq" id="WP_011116201.1">
    <property type="nucleotide sequence ID" value="NC_004917.1"/>
</dbReference>
<dbReference type="SMR" id="Q7VGG0"/>
<dbReference type="STRING" id="235279.HH_1361"/>
<dbReference type="KEGG" id="hhe:HH_1361"/>
<dbReference type="eggNOG" id="COG0669">
    <property type="taxonomic scope" value="Bacteria"/>
</dbReference>
<dbReference type="HOGENOM" id="CLU_100149_0_1_7"/>
<dbReference type="OrthoDB" id="9806661at2"/>
<dbReference type="UniPathway" id="UPA00241">
    <property type="reaction ID" value="UER00355"/>
</dbReference>
<dbReference type="Proteomes" id="UP000002495">
    <property type="component" value="Chromosome"/>
</dbReference>
<dbReference type="GO" id="GO:0005737">
    <property type="term" value="C:cytoplasm"/>
    <property type="evidence" value="ECO:0007669"/>
    <property type="project" value="UniProtKB-SubCell"/>
</dbReference>
<dbReference type="GO" id="GO:0005524">
    <property type="term" value="F:ATP binding"/>
    <property type="evidence" value="ECO:0007669"/>
    <property type="project" value="UniProtKB-KW"/>
</dbReference>
<dbReference type="GO" id="GO:0004595">
    <property type="term" value="F:pantetheine-phosphate adenylyltransferase activity"/>
    <property type="evidence" value="ECO:0007669"/>
    <property type="project" value="UniProtKB-UniRule"/>
</dbReference>
<dbReference type="GO" id="GO:0015937">
    <property type="term" value="P:coenzyme A biosynthetic process"/>
    <property type="evidence" value="ECO:0007669"/>
    <property type="project" value="UniProtKB-UniRule"/>
</dbReference>
<dbReference type="CDD" id="cd02163">
    <property type="entry name" value="PPAT"/>
    <property type="match status" value="1"/>
</dbReference>
<dbReference type="Gene3D" id="3.40.50.620">
    <property type="entry name" value="HUPs"/>
    <property type="match status" value="1"/>
</dbReference>
<dbReference type="HAMAP" id="MF_00151">
    <property type="entry name" value="PPAT_bact"/>
    <property type="match status" value="1"/>
</dbReference>
<dbReference type="InterPro" id="IPR004821">
    <property type="entry name" value="Cyt_trans-like"/>
</dbReference>
<dbReference type="InterPro" id="IPR001980">
    <property type="entry name" value="PPAT"/>
</dbReference>
<dbReference type="InterPro" id="IPR014729">
    <property type="entry name" value="Rossmann-like_a/b/a_fold"/>
</dbReference>
<dbReference type="NCBIfam" id="TIGR01510">
    <property type="entry name" value="coaD_prev_kdtB"/>
    <property type="match status" value="1"/>
</dbReference>
<dbReference type="NCBIfam" id="TIGR00125">
    <property type="entry name" value="cyt_tran_rel"/>
    <property type="match status" value="1"/>
</dbReference>
<dbReference type="PANTHER" id="PTHR21342">
    <property type="entry name" value="PHOSPHOPANTETHEINE ADENYLYLTRANSFERASE"/>
    <property type="match status" value="1"/>
</dbReference>
<dbReference type="PANTHER" id="PTHR21342:SF1">
    <property type="entry name" value="PHOSPHOPANTETHEINE ADENYLYLTRANSFERASE"/>
    <property type="match status" value="1"/>
</dbReference>
<dbReference type="Pfam" id="PF01467">
    <property type="entry name" value="CTP_transf_like"/>
    <property type="match status" value="1"/>
</dbReference>
<dbReference type="PRINTS" id="PR01020">
    <property type="entry name" value="LPSBIOSNTHSS"/>
</dbReference>
<dbReference type="SUPFAM" id="SSF52374">
    <property type="entry name" value="Nucleotidylyl transferase"/>
    <property type="match status" value="1"/>
</dbReference>
<proteinExistence type="inferred from homology"/>
<comment type="function">
    <text evidence="1">Reversibly transfers an adenylyl group from ATP to 4'-phosphopantetheine, yielding dephospho-CoA (dPCoA) and pyrophosphate.</text>
</comment>
<comment type="catalytic activity">
    <reaction evidence="1">
        <text>(R)-4'-phosphopantetheine + ATP + H(+) = 3'-dephospho-CoA + diphosphate</text>
        <dbReference type="Rhea" id="RHEA:19801"/>
        <dbReference type="ChEBI" id="CHEBI:15378"/>
        <dbReference type="ChEBI" id="CHEBI:30616"/>
        <dbReference type="ChEBI" id="CHEBI:33019"/>
        <dbReference type="ChEBI" id="CHEBI:57328"/>
        <dbReference type="ChEBI" id="CHEBI:61723"/>
        <dbReference type="EC" id="2.7.7.3"/>
    </reaction>
</comment>
<comment type="cofactor">
    <cofactor evidence="1">
        <name>Mg(2+)</name>
        <dbReference type="ChEBI" id="CHEBI:18420"/>
    </cofactor>
</comment>
<comment type="pathway">
    <text evidence="1">Cofactor biosynthesis; coenzyme A biosynthesis; CoA from (R)-pantothenate: step 4/5.</text>
</comment>
<comment type="subunit">
    <text evidence="1">Homohexamer.</text>
</comment>
<comment type="subcellular location">
    <subcellularLocation>
        <location evidence="1">Cytoplasm</location>
    </subcellularLocation>
</comment>
<comment type="similarity">
    <text evidence="1">Belongs to the bacterial CoaD family.</text>
</comment>